<dbReference type="EMBL" id="U00089">
    <property type="protein sequence ID" value="AAB95876.1"/>
    <property type="molecule type" value="Genomic_DNA"/>
</dbReference>
<dbReference type="PIR" id="S73554">
    <property type="entry name" value="S73554"/>
</dbReference>
<dbReference type="RefSeq" id="NP_110303.1">
    <property type="nucleotide sequence ID" value="NC_000912.1"/>
</dbReference>
<dbReference type="SMR" id="P75181"/>
<dbReference type="STRING" id="272634.MPN_614"/>
<dbReference type="EnsemblBacteria" id="AAB95876">
    <property type="protein sequence ID" value="AAB95876"/>
    <property type="gene ID" value="MPN_614"/>
</dbReference>
<dbReference type="KEGG" id="mpn:MPN_614"/>
<dbReference type="PATRIC" id="fig|272634.6.peg.678"/>
<dbReference type="HOGENOM" id="CLU_854786_0_0_14"/>
<dbReference type="BioCyc" id="MPNE272634:G1GJ3-990-MONOMER"/>
<dbReference type="Proteomes" id="UP000000808">
    <property type="component" value="Chromosome"/>
</dbReference>
<evidence type="ECO:0000305" key="1"/>
<proteinExistence type="inferred from homology"/>
<keyword id="KW-1185">Reference proteome</keyword>
<gene>
    <name type="ordered locus">MPN_614</name>
    <name type="ORF">C12_orf334</name>
    <name type="ORF">MP228</name>
</gene>
<feature type="chain" id="PRO_0000210699" description="Uncharacterized protein MPN_614">
    <location>
        <begin position="1"/>
        <end position="334"/>
    </location>
</feature>
<accession>P75181</accession>
<protein>
    <recommendedName>
        <fullName>Uncharacterized protein MPN_614</fullName>
    </recommendedName>
</protein>
<reference key="1">
    <citation type="journal article" date="1996" name="Nucleic Acids Res.">
        <title>Complete sequence analysis of the genome of the bacterium Mycoplasma pneumoniae.</title>
        <authorList>
            <person name="Himmelreich R."/>
            <person name="Hilbert H."/>
            <person name="Plagens H."/>
            <person name="Pirkl E."/>
            <person name="Li B.-C."/>
            <person name="Herrmann R."/>
        </authorList>
    </citation>
    <scope>NUCLEOTIDE SEQUENCE [LARGE SCALE GENOMIC DNA]</scope>
    <source>
        <strain>ATCC 29342 / M129 / Subtype 1</strain>
    </source>
</reference>
<comment type="similarity">
    <text evidence="1">Belongs to the MG414/MG415 family.</text>
</comment>
<organism>
    <name type="scientific">Mycoplasma pneumoniae (strain ATCC 29342 / M129 / Subtype 1)</name>
    <name type="common">Mycoplasmoides pneumoniae</name>
    <dbReference type="NCBI Taxonomy" id="272634"/>
    <lineage>
        <taxon>Bacteria</taxon>
        <taxon>Bacillati</taxon>
        <taxon>Mycoplasmatota</taxon>
        <taxon>Mycoplasmoidales</taxon>
        <taxon>Mycoplasmoidaceae</taxon>
        <taxon>Mycoplasmoides</taxon>
    </lineage>
</organism>
<sequence>MPFLKYWKLMGFSLTPLLLSSATINSHVIDSSFYLTKNLVESENQSPIQFNQLSRIILVQLEFDPDSIVDNTSITFNNRTLGQKALLKLRFKREFTLAIQEITELNQLVDQAIDKNTVLQNFLTLKNVERKQQWERLSYLYKLLNFDFRDPQELSLVRDLPRLLKTIFESASINFQVRMGGQLRKITLVKNNNNVFNLGQFEQFLNLDQISINLFEVEFLSFDFISDQYPSWTAKNLPVFSLFESAKNKPTIQKTNQGIQYRLRFRSNYNEQYLNKYRFSIPVVNNGKEFSVLDIQDKELTEEQKNQIAFVIKNGFFISGWYGINCCLKFNQIS</sequence>
<name>Y614_MYCPN</name>